<sequence>MKTKRFDAALILILLAAAFLNTYHIWQDDTANQYYLAAVKSMTQSFHNFFYASFDPSGFVTVDKPPVVLWIQTIFALIFGVHTWSVIIPQALAGVGSVFLLYRMVKPTFGVGAARIAALVMALTPIAVAVSRTNNIDSMLVFTLLLGSTCLLRAVKQGKLVWLLTAFALIGLAFNMKMMQAFMVLPAFVLFYLIASRVSLKKKIGSLLLSLVLLTGLSLSWAIAVDSASSSSRPYVGSSQTNSVLELAFGYNGTERLFGQTTGLAKGDMNAAGGGNMQNQDNMQAPNGNGSSFSQNGNQSFGNHSQAPQPPNGQTGALNGGGGTPPTGGNGPGNGGPGGGGGKSVNMFGTGDPGPLRLFQSALSGQISWMLPFSLIGLLGAIISWYRDRRGHAAKMKETLFWAAWLVPVAGFFSIAGFFHQYYLIMLAPPIAALSGIGWYTMHRLYKNNKDWSSYLLPAAVLITAVFQVYILSAYTSQIGSVWMYVLGLLGLGITLALLMLKRSHPFSKLLTIISLCVLLLTPVYWSATPLLYGGNSVLPESGPQLKGSANGGNMFSSEVDSGLLSYLRKHNTGEEYLFATLTTVTAAPYIIYENESVMAMGGFNGTDPILTVSELKKLIKEGKVKYFLLSENNSGNSELVSWIKKNGKEITSDEYSGSSSSTNSVQGMRRGPGGESQQTLYLVE</sequence>
<gene>
    <name type="primary">yycA</name>
    <name type="ordered locus">BSU40490</name>
</gene>
<protein>
    <recommendedName>
        <fullName>Putative mannosyltransferase YycA</fullName>
        <ecNumber>2.4.1.-</ecNumber>
    </recommendedName>
</protein>
<feature type="chain" id="PRO_0000121503" description="Putative mannosyltransferase YycA">
    <location>
        <begin position="1"/>
        <end position="685"/>
    </location>
</feature>
<feature type="transmembrane region" description="Helical" evidence="1">
    <location>
        <begin position="6"/>
        <end position="26"/>
    </location>
</feature>
<feature type="transmembrane region" description="Helical" evidence="1">
    <location>
        <begin position="68"/>
        <end position="88"/>
    </location>
</feature>
<feature type="transmembrane region" description="Helical" evidence="1">
    <location>
        <begin position="109"/>
        <end position="129"/>
    </location>
</feature>
<feature type="transmembrane region" description="Helical" evidence="1">
    <location>
        <begin position="154"/>
        <end position="174"/>
    </location>
</feature>
<feature type="transmembrane region" description="Helical" evidence="1">
    <location>
        <begin position="176"/>
        <end position="196"/>
    </location>
</feature>
<feature type="transmembrane region" description="Helical" evidence="1">
    <location>
        <begin position="204"/>
        <end position="224"/>
    </location>
</feature>
<feature type="transmembrane region" description="Helical" evidence="1">
    <location>
        <begin position="363"/>
        <end position="383"/>
    </location>
</feature>
<feature type="transmembrane region" description="Helical" evidence="1">
    <location>
        <begin position="399"/>
        <end position="419"/>
    </location>
</feature>
<feature type="transmembrane region" description="Helical" evidence="1">
    <location>
        <begin position="422"/>
        <end position="442"/>
    </location>
</feature>
<feature type="transmembrane region" description="Helical" evidence="1">
    <location>
        <begin position="455"/>
        <end position="475"/>
    </location>
</feature>
<feature type="transmembrane region" description="Helical" evidence="1">
    <location>
        <begin position="479"/>
        <end position="499"/>
    </location>
</feature>
<feature type="transmembrane region" description="Helical" evidence="1">
    <location>
        <begin position="513"/>
        <end position="533"/>
    </location>
</feature>
<feature type="transmembrane region" description="Helical" evidence="1">
    <location>
        <begin position="573"/>
        <end position="593"/>
    </location>
</feature>
<feature type="region of interest" description="Disordered" evidence="2">
    <location>
        <begin position="269"/>
        <end position="347"/>
    </location>
</feature>
<feature type="region of interest" description="Disordered" evidence="2">
    <location>
        <begin position="652"/>
        <end position="685"/>
    </location>
</feature>
<feature type="compositionally biased region" description="Polar residues" evidence="2">
    <location>
        <begin position="277"/>
        <end position="286"/>
    </location>
</feature>
<feature type="compositionally biased region" description="Low complexity" evidence="2">
    <location>
        <begin position="287"/>
        <end position="303"/>
    </location>
</feature>
<feature type="compositionally biased region" description="Gly residues" evidence="2">
    <location>
        <begin position="318"/>
        <end position="343"/>
    </location>
</feature>
<feature type="compositionally biased region" description="Low complexity" evidence="2">
    <location>
        <begin position="654"/>
        <end position="665"/>
    </location>
</feature>
<feature type="compositionally biased region" description="Polar residues" evidence="2">
    <location>
        <begin position="676"/>
        <end position="685"/>
    </location>
</feature>
<feature type="sequence conflict" description="In Ref. 1; BAA05180." evidence="3" ref="1">
    <original>T</original>
    <variation>P</variation>
    <location>
        <position position="584"/>
    </location>
</feature>
<name>YYCA_BACSU</name>
<proteinExistence type="inferred from homology"/>
<reference key="1">
    <citation type="journal article" date="1994" name="DNA Res.">
        <title>Systematic sequencing of the 180 kilobase region of the Bacillus subtilis chromosome containing the replication origin.</title>
        <authorList>
            <person name="Ogasawara N."/>
            <person name="Nakai S."/>
            <person name="Yoshikawa H."/>
        </authorList>
    </citation>
    <scope>NUCLEOTIDE SEQUENCE [GENOMIC DNA]</scope>
    <source>
        <strain>168</strain>
    </source>
</reference>
<reference key="2">
    <citation type="journal article" date="1997" name="Nature">
        <title>The complete genome sequence of the Gram-positive bacterium Bacillus subtilis.</title>
        <authorList>
            <person name="Kunst F."/>
            <person name="Ogasawara N."/>
            <person name="Moszer I."/>
            <person name="Albertini A.M."/>
            <person name="Alloni G."/>
            <person name="Azevedo V."/>
            <person name="Bertero M.G."/>
            <person name="Bessieres P."/>
            <person name="Bolotin A."/>
            <person name="Borchert S."/>
            <person name="Borriss R."/>
            <person name="Boursier L."/>
            <person name="Brans A."/>
            <person name="Braun M."/>
            <person name="Brignell S.C."/>
            <person name="Bron S."/>
            <person name="Brouillet S."/>
            <person name="Bruschi C.V."/>
            <person name="Caldwell B."/>
            <person name="Capuano V."/>
            <person name="Carter N.M."/>
            <person name="Choi S.-K."/>
            <person name="Codani J.-J."/>
            <person name="Connerton I.F."/>
            <person name="Cummings N.J."/>
            <person name="Daniel R.A."/>
            <person name="Denizot F."/>
            <person name="Devine K.M."/>
            <person name="Duesterhoeft A."/>
            <person name="Ehrlich S.D."/>
            <person name="Emmerson P.T."/>
            <person name="Entian K.-D."/>
            <person name="Errington J."/>
            <person name="Fabret C."/>
            <person name="Ferrari E."/>
            <person name="Foulger D."/>
            <person name="Fritz C."/>
            <person name="Fujita M."/>
            <person name="Fujita Y."/>
            <person name="Fuma S."/>
            <person name="Galizzi A."/>
            <person name="Galleron N."/>
            <person name="Ghim S.-Y."/>
            <person name="Glaser P."/>
            <person name="Goffeau A."/>
            <person name="Golightly E.J."/>
            <person name="Grandi G."/>
            <person name="Guiseppi G."/>
            <person name="Guy B.J."/>
            <person name="Haga K."/>
            <person name="Haiech J."/>
            <person name="Harwood C.R."/>
            <person name="Henaut A."/>
            <person name="Hilbert H."/>
            <person name="Holsappel S."/>
            <person name="Hosono S."/>
            <person name="Hullo M.-F."/>
            <person name="Itaya M."/>
            <person name="Jones L.-M."/>
            <person name="Joris B."/>
            <person name="Karamata D."/>
            <person name="Kasahara Y."/>
            <person name="Klaerr-Blanchard M."/>
            <person name="Klein C."/>
            <person name="Kobayashi Y."/>
            <person name="Koetter P."/>
            <person name="Koningstein G."/>
            <person name="Krogh S."/>
            <person name="Kumano M."/>
            <person name="Kurita K."/>
            <person name="Lapidus A."/>
            <person name="Lardinois S."/>
            <person name="Lauber J."/>
            <person name="Lazarevic V."/>
            <person name="Lee S.-M."/>
            <person name="Levine A."/>
            <person name="Liu H."/>
            <person name="Masuda S."/>
            <person name="Mauel C."/>
            <person name="Medigue C."/>
            <person name="Medina N."/>
            <person name="Mellado R.P."/>
            <person name="Mizuno M."/>
            <person name="Moestl D."/>
            <person name="Nakai S."/>
            <person name="Noback M."/>
            <person name="Noone D."/>
            <person name="O'Reilly M."/>
            <person name="Ogawa K."/>
            <person name="Ogiwara A."/>
            <person name="Oudega B."/>
            <person name="Park S.-H."/>
            <person name="Parro V."/>
            <person name="Pohl T.M."/>
            <person name="Portetelle D."/>
            <person name="Porwollik S."/>
            <person name="Prescott A.M."/>
            <person name="Presecan E."/>
            <person name="Pujic P."/>
            <person name="Purnelle B."/>
            <person name="Rapoport G."/>
            <person name="Rey M."/>
            <person name="Reynolds S."/>
            <person name="Rieger M."/>
            <person name="Rivolta C."/>
            <person name="Rocha E."/>
            <person name="Roche B."/>
            <person name="Rose M."/>
            <person name="Sadaie Y."/>
            <person name="Sato T."/>
            <person name="Scanlan E."/>
            <person name="Schleich S."/>
            <person name="Schroeter R."/>
            <person name="Scoffone F."/>
            <person name="Sekiguchi J."/>
            <person name="Sekowska A."/>
            <person name="Seror S.J."/>
            <person name="Serror P."/>
            <person name="Shin B.-S."/>
            <person name="Soldo B."/>
            <person name="Sorokin A."/>
            <person name="Tacconi E."/>
            <person name="Takagi T."/>
            <person name="Takahashi H."/>
            <person name="Takemaru K."/>
            <person name="Takeuchi M."/>
            <person name="Tamakoshi A."/>
            <person name="Tanaka T."/>
            <person name="Terpstra P."/>
            <person name="Tognoni A."/>
            <person name="Tosato V."/>
            <person name="Uchiyama S."/>
            <person name="Vandenbol M."/>
            <person name="Vannier F."/>
            <person name="Vassarotti A."/>
            <person name="Viari A."/>
            <person name="Wambutt R."/>
            <person name="Wedler E."/>
            <person name="Wedler H."/>
            <person name="Weitzenegger T."/>
            <person name="Winters P."/>
            <person name="Wipat A."/>
            <person name="Yamamoto H."/>
            <person name="Yamane K."/>
            <person name="Yasumoto K."/>
            <person name="Yata K."/>
            <person name="Yoshida K."/>
            <person name="Yoshikawa H.-F."/>
            <person name="Zumstein E."/>
            <person name="Yoshikawa H."/>
            <person name="Danchin A."/>
        </authorList>
    </citation>
    <scope>NUCLEOTIDE SEQUENCE [LARGE SCALE GENOMIC DNA]</scope>
    <source>
        <strain>168</strain>
    </source>
</reference>
<reference key="3">
    <citation type="journal article" date="2009" name="Microbiology">
        <title>From a consortium sequence to a unified sequence: the Bacillus subtilis 168 reference genome a decade later.</title>
        <authorList>
            <person name="Barbe V."/>
            <person name="Cruveiller S."/>
            <person name="Kunst F."/>
            <person name="Lenoble P."/>
            <person name="Meurice G."/>
            <person name="Sekowska A."/>
            <person name="Vallenet D."/>
            <person name="Wang T."/>
            <person name="Moszer I."/>
            <person name="Medigue C."/>
            <person name="Danchin A."/>
        </authorList>
    </citation>
    <scope>SEQUENCE REVISION TO 584</scope>
</reference>
<accession>P37483</accession>
<evidence type="ECO:0000255" key="1"/>
<evidence type="ECO:0000256" key="2">
    <source>
        <dbReference type="SAM" id="MobiDB-lite"/>
    </source>
</evidence>
<evidence type="ECO:0000305" key="3"/>
<dbReference type="EC" id="2.4.1.-"/>
<dbReference type="EMBL" id="D26185">
    <property type="protein sequence ID" value="BAA05180.1"/>
    <property type="molecule type" value="Genomic_DNA"/>
</dbReference>
<dbReference type="EMBL" id="AL009126">
    <property type="protein sequence ID" value="CAB16086.2"/>
    <property type="molecule type" value="Genomic_DNA"/>
</dbReference>
<dbReference type="PIR" id="S65974">
    <property type="entry name" value="S65974"/>
</dbReference>
<dbReference type="RefSeq" id="NP_391929.2">
    <property type="nucleotide sequence ID" value="NC_000964.3"/>
</dbReference>
<dbReference type="RefSeq" id="WP_003242651.1">
    <property type="nucleotide sequence ID" value="NZ_OZ025638.1"/>
</dbReference>
<dbReference type="FunCoup" id="P37483">
    <property type="interactions" value="38"/>
</dbReference>
<dbReference type="STRING" id="224308.BSU40490"/>
<dbReference type="PaxDb" id="224308-BSU40490"/>
<dbReference type="EnsemblBacteria" id="CAB16086">
    <property type="protein sequence ID" value="CAB16086"/>
    <property type="gene ID" value="BSU_40490"/>
</dbReference>
<dbReference type="GeneID" id="937828"/>
<dbReference type="KEGG" id="bsu:BSU40490"/>
<dbReference type="PATRIC" id="fig|224308.179.peg.4383"/>
<dbReference type="eggNOG" id="COG1807">
    <property type="taxonomic scope" value="Bacteria"/>
</dbReference>
<dbReference type="InParanoid" id="P37483"/>
<dbReference type="OrthoDB" id="9810398at2"/>
<dbReference type="PhylomeDB" id="P37483"/>
<dbReference type="BioCyc" id="BSUB:BSU40490-MONOMER"/>
<dbReference type="Proteomes" id="UP000001570">
    <property type="component" value="Chromosome"/>
</dbReference>
<dbReference type="GO" id="GO:0005886">
    <property type="term" value="C:plasma membrane"/>
    <property type="evidence" value="ECO:0000318"/>
    <property type="project" value="GO_Central"/>
</dbReference>
<dbReference type="GO" id="GO:0016763">
    <property type="term" value="F:pentosyltransferase activity"/>
    <property type="evidence" value="ECO:0000318"/>
    <property type="project" value="GO_Central"/>
</dbReference>
<dbReference type="GO" id="GO:0009103">
    <property type="term" value="P:lipopolysaccharide biosynthetic process"/>
    <property type="evidence" value="ECO:0007669"/>
    <property type="project" value="UniProtKB-ARBA"/>
</dbReference>
<dbReference type="GO" id="GO:0010041">
    <property type="term" value="P:response to iron(III) ion"/>
    <property type="evidence" value="ECO:0000318"/>
    <property type="project" value="GO_Central"/>
</dbReference>
<dbReference type="InterPro" id="IPR050297">
    <property type="entry name" value="LipidA_mod_glycosyltrf_83"/>
</dbReference>
<dbReference type="InterPro" id="IPR038731">
    <property type="entry name" value="RgtA/B/C-like"/>
</dbReference>
<dbReference type="InterPro" id="IPR056785">
    <property type="entry name" value="YkcA/B-like_C"/>
</dbReference>
<dbReference type="PANTHER" id="PTHR33908">
    <property type="entry name" value="MANNOSYLTRANSFERASE YKCB-RELATED"/>
    <property type="match status" value="1"/>
</dbReference>
<dbReference type="PANTHER" id="PTHR33908:SF3">
    <property type="entry name" value="UNDECAPRENYL PHOSPHATE-ALPHA-4-AMINO-4-DEOXY-L-ARABINOSE ARABINOSYL TRANSFERASE"/>
    <property type="match status" value="1"/>
</dbReference>
<dbReference type="Pfam" id="PF13231">
    <property type="entry name" value="PMT_2"/>
    <property type="match status" value="1"/>
</dbReference>
<dbReference type="Pfam" id="PF24878">
    <property type="entry name" value="YkcB_C"/>
    <property type="match status" value="1"/>
</dbReference>
<organism>
    <name type="scientific">Bacillus subtilis (strain 168)</name>
    <dbReference type="NCBI Taxonomy" id="224308"/>
    <lineage>
        <taxon>Bacteria</taxon>
        <taxon>Bacillati</taxon>
        <taxon>Bacillota</taxon>
        <taxon>Bacilli</taxon>
        <taxon>Bacillales</taxon>
        <taxon>Bacillaceae</taxon>
        <taxon>Bacillus</taxon>
    </lineage>
</organism>
<comment type="subcellular location">
    <subcellularLocation>
        <location evidence="3">Cell membrane</location>
        <topology evidence="3">Multi-pass membrane protein</topology>
    </subcellularLocation>
</comment>
<comment type="similarity">
    <text evidence="3">Belongs to the glycosyltransferase 39 family.</text>
</comment>
<keyword id="KW-1003">Cell membrane</keyword>
<keyword id="KW-0328">Glycosyltransferase</keyword>
<keyword id="KW-0472">Membrane</keyword>
<keyword id="KW-1185">Reference proteome</keyword>
<keyword id="KW-0808">Transferase</keyword>
<keyword id="KW-0812">Transmembrane</keyword>
<keyword id="KW-1133">Transmembrane helix</keyword>